<organism>
    <name type="scientific">Haemophilus influenzae (strain ATCC 51907 / DSM 11121 / KW20 / Rd)</name>
    <dbReference type="NCBI Taxonomy" id="71421"/>
    <lineage>
        <taxon>Bacteria</taxon>
        <taxon>Pseudomonadati</taxon>
        <taxon>Pseudomonadota</taxon>
        <taxon>Gammaproteobacteria</taxon>
        <taxon>Pasteurellales</taxon>
        <taxon>Pasteurellaceae</taxon>
        <taxon>Haemophilus</taxon>
    </lineage>
</organism>
<comment type="subcellular location">
    <subcellularLocation>
        <location evidence="2">Cell inner membrane</location>
        <topology evidence="2">Multi-pass membrane protein</topology>
    </subcellularLocation>
</comment>
<comment type="similarity">
    <text evidence="2">Belongs to the alanine or glycine:cation symporter (AGCS) (TC 2.A.25) family.</text>
</comment>
<evidence type="ECO:0000255" key="1"/>
<evidence type="ECO:0000305" key="2"/>
<name>Y883_HAEIN</name>
<accession>P44917</accession>
<feature type="chain" id="PRO_0000161569" description="Uncharacterized transporter HI_0883">
    <location>
        <begin position="1"/>
        <end position="456"/>
    </location>
</feature>
<feature type="transmembrane region" description="Helical" evidence="1">
    <location>
        <begin position="12"/>
        <end position="32"/>
    </location>
</feature>
<feature type="transmembrane region" description="Helical" evidence="1">
    <location>
        <begin position="63"/>
        <end position="83"/>
    </location>
</feature>
<feature type="transmembrane region" description="Helical" evidence="1">
    <location>
        <begin position="86"/>
        <end position="106"/>
    </location>
</feature>
<feature type="transmembrane region" description="Helical" evidence="1">
    <location>
        <begin position="143"/>
        <end position="163"/>
    </location>
</feature>
<feature type="transmembrane region" description="Helical" evidence="1">
    <location>
        <begin position="179"/>
        <end position="199"/>
    </location>
</feature>
<feature type="transmembrane region" description="Helical" evidence="1">
    <location>
        <begin position="208"/>
        <end position="228"/>
    </location>
</feature>
<feature type="transmembrane region" description="Helical" evidence="1">
    <location>
        <begin position="237"/>
        <end position="257"/>
    </location>
</feature>
<feature type="transmembrane region" description="Helical" evidence="1">
    <location>
        <begin position="305"/>
        <end position="325"/>
    </location>
</feature>
<feature type="transmembrane region" description="Helical" evidence="1">
    <location>
        <begin position="348"/>
        <end position="368"/>
    </location>
</feature>
<feature type="transmembrane region" description="Helical" evidence="1">
    <location>
        <begin position="390"/>
        <end position="410"/>
    </location>
</feature>
<feature type="transmembrane region" description="Helical" evidence="1">
    <location>
        <begin position="414"/>
        <end position="434"/>
    </location>
</feature>
<gene>
    <name type="ordered locus">HI_0883</name>
</gene>
<proteinExistence type="inferred from homology"/>
<dbReference type="EMBL" id="L42023">
    <property type="protein sequence ID" value="AAC22541.1"/>
    <property type="molecule type" value="Genomic_DNA"/>
</dbReference>
<dbReference type="PIR" id="H64099">
    <property type="entry name" value="H64099"/>
</dbReference>
<dbReference type="RefSeq" id="NP_439044.1">
    <property type="nucleotide sequence ID" value="NC_000907.1"/>
</dbReference>
<dbReference type="SMR" id="P44917"/>
<dbReference type="EnsemblBacteria" id="AAC22541">
    <property type="protein sequence ID" value="AAC22541"/>
    <property type="gene ID" value="HI_0883"/>
</dbReference>
<dbReference type="KEGG" id="hin:HI_0883"/>
<dbReference type="PATRIC" id="fig|71421.8.peg.925"/>
<dbReference type="eggNOG" id="COG1115">
    <property type="taxonomic scope" value="Bacteria"/>
</dbReference>
<dbReference type="HOGENOM" id="CLU_024867_1_2_6"/>
<dbReference type="OrthoDB" id="9806926at2"/>
<dbReference type="PhylomeDB" id="P44917"/>
<dbReference type="BioCyc" id="HINF71421:G1GJ1-923-MONOMER"/>
<dbReference type="Proteomes" id="UP000000579">
    <property type="component" value="Chromosome"/>
</dbReference>
<dbReference type="GO" id="GO:0005886">
    <property type="term" value="C:plasma membrane"/>
    <property type="evidence" value="ECO:0000318"/>
    <property type="project" value="GO_Central"/>
</dbReference>
<dbReference type="GO" id="GO:0005283">
    <property type="term" value="F:amino acid:sodium symporter activity"/>
    <property type="evidence" value="ECO:0007669"/>
    <property type="project" value="InterPro"/>
</dbReference>
<dbReference type="FunFam" id="1.20.1740.10:FF:000004">
    <property type="entry name" value="Sodium:alanine symporter family protein"/>
    <property type="match status" value="1"/>
</dbReference>
<dbReference type="Gene3D" id="1.20.1740.10">
    <property type="entry name" value="Amino acid/polyamine transporter I"/>
    <property type="match status" value="1"/>
</dbReference>
<dbReference type="InterPro" id="IPR001463">
    <property type="entry name" value="Na/Ala_symport"/>
</dbReference>
<dbReference type="NCBIfam" id="TIGR00835">
    <property type="entry name" value="agcS"/>
    <property type="match status" value="1"/>
</dbReference>
<dbReference type="PANTHER" id="PTHR30330">
    <property type="entry name" value="AGSS FAMILY TRANSPORTER, SODIUM-ALANINE"/>
    <property type="match status" value="1"/>
</dbReference>
<dbReference type="PANTHER" id="PTHR30330:SF3">
    <property type="entry name" value="TRANSCRIPTIONAL REGULATOR, LRP FAMILY"/>
    <property type="match status" value="1"/>
</dbReference>
<dbReference type="Pfam" id="PF01235">
    <property type="entry name" value="Na_Ala_symp"/>
    <property type="match status" value="1"/>
</dbReference>
<dbReference type="PRINTS" id="PR00175">
    <property type="entry name" value="NAALASMPORT"/>
</dbReference>
<dbReference type="PROSITE" id="PS00873">
    <property type="entry name" value="NA_ALANINE_SYMP"/>
    <property type="match status" value="1"/>
</dbReference>
<reference key="1">
    <citation type="journal article" date="1995" name="Science">
        <title>Whole-genome random sequencing and assembly of Haemophilus influenzae Rd.</title>
        <authorList>
            <person name="Fleischmann R.D."/>
            <person name="Adams M.D."/>
            <person name="White O."/>
            <person name="Clayton R.A."/>
            <person name="Kirkness E.F."/>
            <person name="Kerlavage A.R."/>
            <person name="Bult C.J."/>
            <person name="Tomb J.-F."/>
            <person name="Dougherty B.A."/>
            <person name="Merrick J.M."/>
            <person name="McKenney K."/>
            <person name="Sutton G.G."/>
            <person name="FitzHugh W."/>
            <person name="Fields C.A."/>
            <person name="Gocayne J.D."/>
            <person name="Scott J.D."/>
            <person name="Shirley R."/>
            <person name="Liu L.-I."/>
            <person name="Glodek A."/>
            <person name="Kelley J.M."/>
            <person name="Weidman J.F."/>
            <person name="Phillips C.A."/>
            <person name="Spriggs T."/>
            <person name="Hedblom E."/>
            <person name="Cotton M.D."/>
            <person name="Utterback T.R."/>
            <person name="Hanna M.C."/>
            <person name="Nguyen D.T."/>
            <person name="Saudek D.M."/>
            <person name="Brandon R.C."/>
            <person name="Fine L.D."/>
            <person name="Fritchman J.L."/>
            <person name="Fuhrmann J.L."/>
            <person name="Geoghagen N.S.M."/>
            <person name="Gnehm C.L."/>
            <person name="McDonald L.A."/>
            <person name="Small K.V."/>
            <person name="Fraser C.M."/>
            <person name="Smith H.O."/>
            <person name="Venter J.C."/>
        </authorList>
    </citation>
    <scope>NUCLEOTIDE SEQUENCE [LARGE SCALE GENOMIC DNA]</scope>
    <source>
        <strain>ATCC 51907 / DSM 11121 / KW20 / Rd</strain>
    </source>
</reference>
<keyword id="KW-0997">Cell inner membrane</keyword>
<keyword id="KW-1003">Cell membrane</keyword>
<keyword id="KW-0472">Membrane</keyword>
<keyword id="KW-1185">Reference proteome</keyword>
<keyword id="KW-0769">Symport</keyword>
<keyword id="KW-0812">Transmembrane</keyword>
<keyword id="KW-1133">Transmembrane helix</keyword>
<keyword id="KW-0813">Transport</keyword>
<sequence>MTIESILSAIDSFIWGAPLLILLSGTGLYLTLRLGFIQIRYLPRALGYLFKKDKGGKGDVSSFAALCTALAATIGTGNIVGVATAVQAGGPGAIFWMWLVALLGMATKYAECLLAVKYRVRDKNGFMAGGPMYYIERGLGIRWLAKLFALFGVMVAFFGIGTFPQVNAITHAMQDTFNIPVLVTAIIVTLLVGLIILGGVKRIATASSVIVPFMAILYVTTSLVIILLNIEKVPDAILLIIDSAFDPQAALGGAVGLTVMKAIQSGVARGIFSNESGLGSAPIAAAAAQTREPVRQGLISMTGTFLDTIIVCTMTGIVLVLTGAWNNPELAGATVTNYAFAQGLGTSIGATIVTVGLLFFAFTTILGWCYYGERCFVYLVGIRGVKLYRLAYIMLVGLGAFLHLNLIWIIADIVNGLMAFPNLIALIGLRKVIIEETKDYFQRLKINHYDQDEVIK</sequence>
<protein>
    <recommendedName>
        <fullName>Uncharacterized transporter HI_0883</fullName>
    </recommendedName>
</protein>